<feature type="chain" id="PRO_1000057161" description="UPF0758 protein YicR">
    <location>
        <begin position="1"/>
        <end position="222"/>
    </location>
</feature>
<feature type="domain" description="MPN" evidence="2">
    <location>
        <begin position="100"/>
        <end position="222"/>
    </location>
</feature>
<feature type="short sequence motif" description="JAMM motif" evidence="2">
    <location>
        <begin position="171"/>
        <end position="184"/>
    </location>
</feature>
<feature type="binding site" evidence="2">
    <location>
        <position position="171"/>
    </location>
    <ligand>
        <name>Zn(2+)</name>
        <dbReference type="ChEBI" id="CHEBI:29105"/>
        <note>catalytic</note>
    </ligand>
</feature>
<feature type="binding site" evidence="2">
    <location>
        <position position="173"/>
    </location>
    <ligand>
        <name>Zn(2+)</name>
        <dbReference type="ChEBI" id="CHEBI:29105"/>
        <note>catalytic</note>
    </ligand>
</feature>
<feature type="binding site" evidence="2">
    <location>
        <position position="184"/>
    </location>
    <ligand>
        <name>Zn(2+)</name>
        <dbReference type="ChEBI" id="CHEBI:29105"/>
        <note>catalytic</note>
    </ligand>
</feature>
<keyword id="KW-0378">Hydrolase</keyword>
<keyword id="KW-0479">Metal-binding</keyword>
<keyword id="KW-0482">Metalloprotease</keyword>
<keyword id="KW-0645">Protease</keyword>
<keyword id="KW-0862">Zinc</keyword>
<name>YICR_ECOHS</name>
<comment type="similarity">
    <text evidence="1">Belongs to the UPF0758 family. YicR subfamily.</text>
</comment>
<dbReference type="EMBL" id="CP000802">
    <property type="protein sequence ID" value="ABV08054.1"/>
    <property type="molecule type" value="Genomic_DNA"/>
</dbReference>
<dbReference type="RefSeq" id="WP_012136367.1">
    <property type="nucleotide sequence ID" value="NC_009800.1"/>
</dbReference>
<dbReference type="SMR" id="A8A6A0"/>
<dbReference type="KEGG" id="ecx:EcHS_A3847"/>
<dbReference type="HOGENOM" id="CLU_073529_0_1_6"/>
<dbReference type="GO" id="GO:0046872">
    <property type="term" value="F:metal ion binding"/>
    <property type="evidence" value="ECO:0007669"/>
    <property type="project" value="UniProtKB-KW"/>
</dbReference>
<dbReference type="GO" id="GO:0008237">
    <property type="term" value="F:metallopeptidase activity"/>
    <property type="evidence" value="ECO:0007669"/>
    <property type="project" value="UniProtKB-KW"/>
</dbReference>
<dbReference type="GO" id="GO:0006508">
    <property type="term" value="P:proteolysis"/>
    <property type="evidence" value="ECO:0007669"/>
    <property type="project" value="UniProtKB-KW"/>
</dbReference>
<dbReference type="CDD" id="cd08071">
    <property type="entry name" value="MPN_DUF2466"/>
    <property type="match status" value="1"/>
</dbReference>
<dbReference type="Gene3D" id="3.40.140.10">
    <property type="entry name" value="Cytidine Deaminase, domain 2"/>
    <property type="match status" value="1"/>
</dbReference>
<dbReference type="HAMAP" id="MF_00018">
    <property type="entry name" value="UPF0758_YicR"/>
    <property type="match status" value="1"/>
</dbReference>
<dbReference type="InterPro" id="IPR037518">
    <property type="entry name" value="MPN"/>
</dbReference>
<dbReference type="InterPro" id="IPR025657">
    <property type="entry name" value="RadC_JAB"/>
</dbReference>
<dbReference type="InterPro" id="IPR010994">
    <property type="entry name" value="RuvA_2-like"/>
</dbReference>
<dbReference type="InterPro" id="IPR001405">
    <property type="entry name" value="UPF0758"/>
</dbReference>
<dbReference type="InterPro" id="IPR020891">
    <property type="entry name" value="UPF0758_CS"/>
</dbReference>
<dbReference type="InterPro" id="IPR046778">
    <property type="entry name" value="UPF0758_N"/>
</dbReference>
<dbReference type="InterPro" id="IPR022820">
    <property type="entry name" value="UPF0758_YicR"/>
</dbReference>
<dbReference type="NCBIfam" id="NF000642">
    <property type="entry name" value="PRK00024.1"/>
    <property type="match status" value="1"/>
</dbReference>
<dbReference type="NCBIfam" id="TIGR00608">
    <property type="entry name" value="radc"/>
    <property type="match status" value="1"/>
</dbReference>
<dbReference type="PANTHER" id="PTHR30471">
    <property type="entry name" value="DNA REPAIR PROTEIN RADC"/>
    <property type="match status" value="1"/>
</dbReference>
<dbReference type="PANTHER" id="PTHR30471:SF3">
    <property type="entry name" value="UPF0758 PROTEIN YEES-RELATED"/>
    <property type="match status" value="1"/>
</dbReference>
<dbReference type="Pfam" id="PF04002">
    <property type="entry name" value="RadC"/>
    <property type="match status" value="1"/>
</dbReference>
<dbReference type="Pfam" id="PF20582">
    <property type="entry name" value="UPF0758_N"/>
    <property type="match status" value="1"/>
</dbReference>
<dbReference type="SUPFAM" id="SSF47781">
    <property type="entry name" value="RuvA domain 2-like"/>
    <property type="match status" value="1"/>
</dbReference>
<dbReference type="PROSITE" id="PS50249">
    <property type="entry name" value="MPN"/>
    <property type="match status" value="1"/>
</dbReference>
<dbReference type="PROSITE" id="PS01302">
    <property type="entry name" value="UPF0758"/>
    <property type="match status" value="1"/>
</dbReference>
<accession>A8A6A0</accession>
<proteinExistence type="inferred from homology"/>
<gene>
    <name evidence="1" type="primary">yicR</name>
    <name type="ordered locus">EcHS_A3847</name>
</gene>
<reference key="1">
    <citation type="journal article" date="2008" name="J. Bacteriol.">
        <title>The pangenome structure of Escherichia coli: comparative genomic analysis of E. coli commensal and pathogenic isolates.</title>
        <authorList>
            <person name="Rasko D.A."/>
            <person name="Rosovitz M.J."/>
            <person name="Myers G.S.A."/>
            <person name="Mongodin E.F."/>
            <person name="Fricke W.F."/>
            <person name="Gajer P."/>
            <person name="Crabtree J."/>
            <person name="Sebaihia M."/>
            <person name="Thomson N.R."/>
            <person name="Chaudhuri R."/>
            <person name="Henderson I.R."/>
            <person name="Sperandio V."/>
            <person name="Ravel J."/>
        </authorList>
    </citation>
    <scope>NUCLEOTIDE SEQUENCE [LARGE SCALE GENOMIC DNA]</scope>
    <source>
        <strain>HS</strain>
    </source>
</reference>
<organism>
    <name type="scientific">Escherichia coli O9:H4 (strain HS)</name>
    <dbReference type="NCBI Taxonomy" id="331112"/>
    <lineage>
        <taxon>Bacteria</taxon>
        <taxon>Pseudomonadati</taxon>
        <taxon>Pseudomonadota</taxon>
        <taxon>Gammaproteobacteria</taxon>
        <taxon>Enterobacterales</taxon>
        <taxon>Enterobacteriaceae</taxon>
        <taxon>Escherichia</taxon>
    </lineage>
</organism>
<protein>
    <recommendedName>
        <fullName evidence="1">UPF0758 protein YicR</fullName>
    </recommendedName>
</protein>
<sequence length="222" mass="25257">MKNNAQLLMPREKMLKFGISALTDVELLALFLRTGTRGKDVLTLAKEMLENFGSLYGLLTSEYEQFSGVHGIGVAKFAQLKGIAELARRYYNVRMREKSPLLSPEMTREFLQSQLTGEEREIFMVIFLDSQHRVITHSRLFSGTLNHVEVHPREIIREAIKINASALILAHNHPSGCAEPSKADKLITERIIKSCQFMDLRVLDHIVIGRGEYVSFAERGWI</sequence>
<evidence type="ECO:0000255" key="1">
    <source>
        <dbReference type="HAMAP-Rule" id="MF_00018"/>
    </source>
</evidence>
<evidence type="ECO:0000255" key="2">
    <source>
        <dbReference type="PROSITE-ProRule" id="PRU01182"/>
    </source>
</evidence>